<dbReference type="EMBL" id="CP000099">
    <property type="protein sequence ID" value="AAZ70490.1"/>
    <property type="molecule type" value="Genomic_DNA"/>
</dbReference>
<dbReference type="SMR" id="Q46CA2"/>
<dbReference type="STRING" id="269797.Mbar_A1542"/>
<dbReference type="PaxDb" id="269797-Mbar_A1542"/>
<dbReference type="KEGG" id="mba:Mbar_A1542"/>
<dbReference type="eggNOG" id="arCOG05153">
    <property type="taxonomic scope" value="Archaea"/>
</dbReference>
<dbReference type="HOGENOM" id="CLU_132825_2_3_2"/>
<dbReference type="OrthoDB" id="146036at2157"/>
<dbReference type="GO" id="GO:0005737">
    <property type="term" value="C:cytoplasm"/>
    <property type="evidence" value="ECO:0007669"/>
    <property type="project" value="UniProtKB-SubCell"/>
</dbReference>
<dbReference type="GO" id="GO:0005524">
    <property type="term" value="F:ATP binding"/>
    <property type="evidence" value="ECO:0007669"/>
    <property type="project" value="InterPro"/>
</dbReference>
<dbReference type="GO" id="GO:0046872">
    <property type="term" value="F:metal ion binding"/>
    <property type="evidence" value="ECO:0007669"/>
    <property type="project" value="TreeGrafter"/>
</dbReference>
<dbReference type="GO" id="GO:0044183">
    <property type="term" value="F:protein folding chaperone"/>
    <property type="evidence" value="ECO:0007669"/>
    <property type="project" value="InterPro"/>
</dbReference>
<dbReference type="GO" id="GO:0051087">
    <property type="term" value="F:protein-folding chaperone binding"/>
    <property type="evidence" value="ECO:0007669"/>
    <property type="project" value="TreeGrafter"/>
</dbReference>
<dbReference type="GO" id="GO:0051082">
    <property type="term" value="F:unfolded protein binding"/>
    <property type="evidence" value="ECO:0007669"/>
    <property type="project" value="TreeGrafter"/>
</dbReference>
<dbReference type="GO" id="GO:0051085">
    <property type="term" value="P:chaperone cofactor-dependent protein refolding"/>
    <property type="evidence" value="ECO:0007669"/>
    <property type="project" value="TreeGrafter"/>
</dbReference>
<dbReference type="CDD" id="cd00320">
    <property type="entry name" value="cpn10"/>
    <property type="match status" value="1"/>
</dbReference>
<dbReference type="FunFam" id="2.30.33.40:FF:000001">
    <property type="entry name" value="10 kDa chaperonin"/>
    <property type="match status" value="1"/>
</dbReference>
<dbReference type="Gene3D" id="2.30.33.40">
    <property type="entry name" value="GroES chaperonin"/>
    <property type="match status" value="1"/>
</dbReference>
<dbReference type="HAMAP" id="MF_00580">
    <property type="entry name" value="CH10"/>
    <property type="match status" value="1"/>
</dbReference>
<dbReference type="InterPro" id="IPR020818">
    <property type="entry name" value="Chaperonin_GroES"/>
</dbReference>
<dbReference type="InterPro" id="IPR037124">
    <property type="entry name" value="Chaperonin_GroES_sf"/>
</dbReference>
<dbReference type="InterPro" id="IPR018369">
    <property type="entry name" value="Chaprnonin_Cpn10_CS"/>
</dbReference>
<dbReference type="InterPro" id="IPR011032">
    <property type="entry name" value="GroES-like_sf"/>
</dbReference>
<dbReference type="NCBIfam" id="NF001539">
    <property type="entry name" value="PRK00364.3-5"/>
    <property type="match status" value="1"/>
</dbReference>
<dbReference type="PANTHER" id="PTHR10772">
    <property type="entry name" value="10 KDA HEAT SHOCK PROTEIN"/>
    <property type="match status" value="1"/>
</dbReference>
<dbReference type="PANTHER" id="PTHR10772:SF63">
    <property type="entry name" value="20 KDA CHAPERONIN, CHLOROPLASTIC"/>
    <property type="match status" value="1"/>
</dbReference>
<dbReference type="Pfam" id="PF00166">
    <property type="entry name" value="Cpn10"/>
    <property type="match status" value="1"/>
</dbReference>
<dbReference type="PRINTS" id="PR00297">
    <property type="entry name" value="CHAPERONIN10"/>
</dbReference>
<dbReference type="SMART" id="SM00883">
    <property type="entry name" value="Cpn10"/>
    <property type="match status" value="1"/>
</dbReference>
<dbReference type="SUPFAM" id="SSF50129">
    <property type="entry name" value="GroES-like"/>
    <property type="match status" value="1"/>
</dbReference>
<dbReference type="PROSITE" id="PS00681">
    <property type="entry name" value="CHAPERONINS_CPN10"/>
    <property type="match status" value="1"/>
</dbReference>
<protein>
    <recommendedName>
        <fullName evidence="1">Co-chaperonin GroES</fullName>
    </recommendedName>
    <alternativeName>
        <fullName evidence="1">10 kDa chaperonin</fullName>
    </alternativeName>
    <alternativeName>
        <fullName evidence="1">Chaperonin-10</fullName>
        <shortName evidence="1">Cpn10</shortName>
    </alternativeName>
</protein>
<keyword id="KW-0143">Chaperone</keyword>
<keyword id="KW-0963">Cytoplasm</keyword>
<sequence length="92" mass="10450">MIIKPIGERVLLKHQKKQEVTKGGIYIPESARQEKKEGIVISVGTFEDGKELPLKKGDHVIYGGYQSDEIEIDDEKYIFVDFKDILATIAEE</sequence>
<name>CH10_METBF</name>
<feature type="chain" id="PRO_1000025299" description="Co-chaperonin GroES">
    <location>
        <begin position="1"/>
        <end position="92"/>
    </location>
</feature>
<proteinExistence type="inferred from homology"/>
<reference key="1">
    <citation type="journal article" date="2006" name="J. Bacteriol.">
        <title>The Methanosarcina barkeri genome: comparative analysis with Methanosarcina acetivorans and Methanosarcina mazei reveals extensive rearrangement within methanosarcinal genomes.</title>
        <authorList>
            <person name="Maeder D.L."/>
            <person name="Anderson I."/>
            <person name="Brettin T.S."/>
            <person name="Bruce D.C."/>
            <person name="Gilna P."/>
            <person name="Han C.S."/>
            <person name="Lapidus A."/>
            <person name="Metcalf W.W."/>
            <person name="Saunders E."/>
            <person name="Tapia R."/>
            <person name="Sowers K.R."/>
        </authorList>
    </citation>
    <scope>NUCLEOTIDE SEQUENCE [LARGE SCALE GENOMIC DNA]</scope>
    <source>
        <strain>Fusaro / DSM 804</strain>
    </source>
</reference>
<gene>
    <name evidence="1" type="primary">groES</name>
    <name evidence="1" type="synonym">groS</name>
    <name type="ordered locus">Mbar_A1542</name>
</gene>
<evidence type="ECO:0000255" key="1">
    <source>
        <dbReference type="HAMAP-Rule" id="MF_00580"/>
    </source>
</evidence>
<accession>Q46CA2</accession>
<organism>
    <name type="scientific">Methanosarcina barkeri (strain Fusaro / DSM 804)</name>
    <dbReference type="NCBI Taxonomy" id="269797"/>
    <lineage>
        <taxon>Archaea</taxon>
        <taxon>Methanobacteriati</taxon>
        <taxon>Methanobacteriota</taxon>
        <taxon>Stenosarchaea group</taxon>
        <taxon>Methanomicrobia</taxon>
        <taxon>Methanosarcinales</taxon>
        <taxon>Methanosarcinaceae</taxon>
        <taxon>Methanosarcina</taxon>
    </lineage>
</organism>
<comment type="function">
    <text evidence="1">Together with the chaperonin GroEL, plays an essential role in assisting protein folding. The GroEL-GroES system forms a nano-cage that allows encapsulation of the non-native substrate proteins and provides a physical environment optimized to promote and accelerate protein folding. GroES binds to the apical surface of the GroEL ring, thereby capping the opening of the GroEL channel.</text>
</comment>
<comment type="subunit">
    <text evidence="1">Heptamer of 7 subunits arranged in a ring. Interacts with the chaperonin GroEL.</text>
</comment>
<comment type="subcellular location">
    <subcellularLocation>
        <location evidence="1">Cytoplasm</location>
    </subcellularLocation>
</comment>
<comment type="similarity">
    <text evidence="1">Belongs to the GroES chaperonin family.</text>
</comment>